<protein>
    <recommendedName>
        <fullName evidence="1">Urease subunit gamma</fullName>
        <ecNumber evidence="1">3.5.1.5</ecNumber>
    </recommendedName>
    <alternativeName>
        <fullName evidence="1">Urea amidohydrolase subunit gamma</fullName>
    </alternativeName>
</protein>
<accession>B3H2L5</accession>
<evidence type="ECO:0000255" key="1">
    <source>
        <dbReference type="HAMAP-Rule" id="MF_00739"/>
    </source>
</evidence>
<comment type="catalytic activity">
    <reaction evidence="1">
        <text>urea + 2 H2O + H(+) = hydrogencarbonate + 2 NH4(+)</text>
        <dbReference type="Rhea" id="RHEA:20557"/>
        <dbReference type="ChEBI" id="CHEBI:15377"/>
        <dbReference type="ChEBI" id="CHEBI:15378"/>
        <dbReference type="ChEBI" id="CHEBI:16199"/>
        <dbReference type="ChEBI" id="CHEBI:17544"/>
        <dbReference type="ChEBI" id="CHEBI:28938"/>
        <dbReference type="EC" id="3.5.1.5"/>
    </reaction>
</comment>
<comment type="pathway">
    <text evidence="1">Nitrogen metabolism; urea degradation; CO(2) and NH(3) from urea (urease route): step 1/1.</text>
</comment>
<comment type="subunit">
    <text evidence="1">Heterotrimer of UreA (gamma), UreB (beta) and UreC (alpha) subunits. Three heterotrimers associate to form the active enzyme.</text>
</comment>
<comment type="subcellular location">
    <subcellularLocation>
        <location evidence="1">Cytoplasm</location>
    </subcellularLocation>
</comment>
<comment type="similarity">
    <text evidence="1">Belongs to the urease gamma subunit family.</text>
</comment>
<feature type="chain" id="PRO_1000199847" description="Urease subunit gamma">
    <location>
        <begin position="1"/>
        <end position="100"/>
    </location>
</feature>
<proteinExistence type="inferred from homology"/>
<reference key="1">
    <citation type="submission" date="2008-06" db="EMBL/GenBank/DDBJ databases">
        <title>Genome and proteome analysis of A. pleuropneumoniae serotype 7.</title>
        <authorList>
            <person name="Linke B."/>
            <person name="Buettner F."/>
            <person name="Martinez-Arias R."/>
            <person name="Goesmann A."/>
            <person name="Baltes N."/>
            <person name="Tegetmeyer H."/>
            <person name="Singh M."/>
            <person name="Gerlach G.F."/>
        </authorList>
    </citation>
    <scope>NUCLEOTIDE SEQUENCE [LARGE SCALE GENOMIC DNA]</scope>
    <source>
        <strain>AP76</strain>
    </source>
</reference>
<name>URE3_ACTP7</name>
<gene>
    <name evidence="1" type="primary">ureA</name>
    <name type="ordered locus">APP7_1680</name>
</gene>
<keyword id="KW-0963">Cytoplasm</keyword>
<keyword id="KW-0378">Hydrolase</keyword>
<dbReference type="EC" id="3.5.1.5" evidence="1"/>
<dbReference type="EMBL" id="CP001091">
    <property type="protein sequence ID" value="ACE62332.1"/>
    <property type="molecule type" value="Genomic_DNA"/>
</dbReference>
<dbReference type="RefSeq" id="WP_005599005.1">
    <property type="nucleotide sequence ID" value="NC_010939.1"/>
</dbReference>
<dbReference type="SMR" id="B3H2L5"/>
<dbReference type="GeneID" id="92743739"/>
<dbReference type="KEGG" id="apa:APP7_1680"/>
<dbReference type="HOGENOM" id="CLU_145825_1_0_6"/>
<dbReference type="UniPathway" id="UPA00258">
    <property type="reaction ID" value="UER00370"/>
</dbReference>
<dbReference type="Proteomes" id="UP000001226">
    <property type="component" value="Chromosome"/>
</dbReference>
<dbReference type="GO" id="GO:0005737">
    <property type="term" value="C:cytoplasm"/>
    <property type="evidence" value="ECO:0007669"/>
    <property type="project" value="UniProtKB-SubCell"/>
</dbReference>
<dbReference type="GO" id="GO:0016151">
    <property type="term" value="F:nickel cation binding"/>
    <property type="evidence" value="ECO:0007669"/>
    <property type="project" value="InterPro"/>
</dbReference>
<dbReference type="GO" id="GO:0009039">
    <property type="term" value="F:urease activity"/>
    <property type="evidence" value="ECO:0007669"/>
    <property type="project" value="UniProtKB-UniRule"/>
</dbReference>
<dbReference type="GO" id="GO:0043419">
    <property type="term" value="P:urea catabolic process"/>
    <property type="evidence" value="ECO:0007669"/>
    <property type="project" value="UniProtKB-UniRule"/>
</dbReference>
<dbReference type="CDD" id="cd00390">
    <property type="entry name" value="Urease_gamma"/>
    <property type="match status" value="1"/>
</dbReference>
<dbReference type="Gene3D" id="3.30.280.10">
    <property type="entry name" value="Urease, gamma-like subunit"/>
    <property type="match status" value="1"/>
</dbReference>
<dbReference type="HAMAP" id="MF_00739">
    <property type="entry name" value="Urease_gamma"/>
    <property type="match status" value="1"/>
</dbReference>
<dbReference type="InterPro" id="IPR012010">
    <property type="entry name" value="Urease_gamma"/>
</dbReference>
<dbReference type="InterPro" id="IPR002026">
    <property type="entry name" value="Urease_gamma/gamma-beta_su"/>
</dbReference>
<dbReference type="InterPro" id="IPR036463">
    <property type="entry name" value="Urease_gamma_sf"/>
</dbReference>
<dbReference type="InterPro" id="IPR050069">
    <property type="entry name" value="Urease_subunit"/>
</dbReference>
<dbReference type="NCBIfam" id="NF009712">
    <property type="entry name" value="PRK13241.1"/>
    <property type="match status" value="1"/>
</dbReference>
<dbReference type="NCBIfam" id="TIGR00193">
    <property type="entry name" value="urease_gam"/>
    <property type="match status" value="1"/>
</dbReference>
<dbReference type="PANTHER" id="PTHR33569">
    <property type="entry name" value="UREASE"/>
    <property type="match status" value="1"/>
</dbReference>
<dbReference type="PANTHER" id="PTHR33569:SF1">
    <property type="entry name" value="UREASE"/>
    <property type="match status" value="1"/>
</dbReference>
<dbReference type="Pfam" id="PF00547">
    <property type="entry name" value="Urease_gamma"/>
    <property type="match status" value="1"/>
</dbReference>
<dbReference type="PIRSF" id="PIRSF001223">
    <property type="entry name" value="Urease_gamma"/>
    <property type="match status" value="1"/>
</dbReference>
<dbReference type="SUPFAM" id="SSF54111">
    <property type="entry name" value="Urease, gamma-subunit"/>
    <property type="match status" value="1"/>
</dbReference>
<sequence>MHLTSREQEKLMLFLAGELAAKRKARGVKLNYPEAIAYIASHLQEAARDGMSVAEVMQYGATLLTVDDVMEGIAEMVHEVQIEATFPDGTKLVTVHNPIR</sequence>
<organism>
    <name type="scientific">Actinobacillus pleuropneumoniae serotype 7 (strain AP76)</name>
    <dbReference type="NCBI Taxonomy" id="537457"/>
    <lineage>
        <taxon>Bacteria</taxon>
        <taxon>Pseudomonadati</taxon>
        <taxon>Pseudomonadota</taxon>
        <taxon>Gammaproteobacteria</taxon>
        <taxon>Pasteurellales</taxon>
        <taxon>Pasteurellaceae</taxon>
        <taxon>Actinobacillus</taxon>
    </lineage>
</organism>